<feature type="chain" id="PRO_1000075180" description="Transcription antitermination protein NusB">
    <location>
        <begin position="1"/>
        <end position="137"/>
    </location>
</feature>
<dbReference type="EMBL" id="AM849034">
    <property type="protein sequence ID" value="CAQ02136.1"/>
    <property type="molecule type" value="Genomic_DNA"/>
</dbReference>
<dbReference type="RefSeq" id="WP_012299362.1">
    <property type="nucleotide sequence ID" value="NZ_MZMN01000003.1"/>
</dbReference>
<dbReference type="SMR" id="B0REX0"/>
<dbReference type="STRING" id="31964.CMS2040"/>
<dbReference type="KEGG" id="cms:CMS2040"/>
<dbReference type="eggNOG" id="COG0781">
    <property type="taxonomic scope" value="Bacteria"/>
</dbReference>
<dbReference type="HOGENOM" id="CLU_087843_2_3_11"/>
<dbReference type="OrthoDB" id="3528057at2"/>
<dbReference type="Proteomes" id="UP000001318">
    <property type="component" value="Chromosome"/>
</dbReference>
<dbReference type="GO" id="GO:0005829">
    <property type="term" value="C:cytosol"/>
    <property type="evidence" value="ECO:0007669"/>
    <property type="project" value="TreeGrafter"/>
</dbReference>
<dbReference type="GO" id="GO:0003723">
    <property type="term" value="F:RNA binding"/>
    <property type="evidence" value="ECO:0007669"/>
    <property type="project" value="UniProtKB-UniRule"/>
</dbReference>
<dbReference type="GO" id="GO:0006353">
    <property type="term" value="P:DNA-templated transcription termination"/>
    <property type="evidence" value="ECO:0007669"/>
    <property type="project" value="UniProtKB-UniRule"/>
</dbReference>
<dbReference type="GO" id="GO:0031564">
    <property type="term" value="P:transcription antitermination"/>
    <property type="evidence" value="ECO:0007669"/>
    <property type="project" value="UniProtKB-KW"/>
</dbReference>
<dbReference type="Gene3D" id="1.10.940.10">
    <property type="entry name" value="NusB-like"/>
    <property type="match status" value="1"/>
</dbReference>
<dbReference type="HAMAP" id="MF_00073">
    <property type="entry name" value="NusB"/>
    <property type="match status" value="1"/>
</dbReference>
<dbReference type="InterPro" id="IPR035926">
    <property type="entry name" value="NusB-like_sf"/>
</dbReference>
<dbReference type="InterPro" id="IPR011605">
    <property type="entry name" value="NusB_fam"/>
</dbReference>
<dbReference type="InterPro" id="IPR006027">
    <property type="entry name" value="NusB_RsmB_TIM44"/>
</dbReference>
<dbReference type="NCBIfam" id="TIGR01951">
    <property type="entry name" value="nusB"/>
    <property type="match status" value="1"/>
</dbReference>
<dbReference type="PANTHER" id="PTHR11078:SF3">
    <property type="entry name" value="ANTITERMINATION NUSB DOMAIN-CONTAINING PROTEIN"/>
    <property type="match status" value="1"/>
</dbReference>
<dbReference type="PANTHER" id="PTHR11078">
    <property type="entry name" value="N UTILIZATION SUBSTANCE PROTEIN B-RELATED"/>
    <property type="match status" value="1"/>
</dbReference>
<dbReference type="Pfam" id="PF01029">
    <property type="entry name" value="NusB"/>
    <property type="match status" value="1"/>
</dbReference>
<dbReference type="SUPFAM" id="SSF48013">
    <property type="entry name" value="NusB-like"/>
    <property type="match status" value="1"/>
</dbReference>
<keyword id="KW-0694">RNA-binding</keyword>
<keyword id="KW-0804">Transcription</keyword>
<keyword id="KW-0889">Transcription antitermination</keyword>
<keyword id="KW-0805">Transcription regulation</keyword>
<gene>
    <name evidence="1" type="primary">nusB</name>
    <name type="ordered locus">CMS2040</name>
</gene>
<accession>B0REX0</accession>
<name>NUSB_CLASE</name>
<protein>
    <recommendedName>
        <fullName evidence="1">Transcription antitermination protein NusB</fullName>
    </recommendedName>
    <alternativeName>
        <fullName evidence="1">Antitermination factor NusB</fullName>
    </alternativeName>
</protein>
<evidence type="ECO:0000255" key="1">
    <source>
        <dbReference type="HAMAP-Rule" id="MF_00073"/>
    </source>
</evidence>
<organism>
    <name type="scientific">Clavibacter sepedonicus</name>
    <name type="common">Clavibacter michiganensis subsp. sepedonicus</name>
    <dbReference type="NCBI Taxonomy" id="31964"/>
    <lineage>
        <taxon>Bacteria</taxon>
        <taxon>Bacillati</taxon>
        <taxon>Actinomycetota</taxon>
        <taxon>Actinomycetes</taxon>
        <taxon>Micrococcales</taxon>
        <taxon>Microbacteriaceae</taxon>
        <taxon>Clavibacter</taxon>
    </lineage>
</organism>
<reference key="1">
    <citation type="journal article" date="2008" name="J. Bacteriol.">
        <title>Genome of the actinomycete plant pathogen Clavibacter michiganensis subsp. sepedonicus suggests recent niche adaptation.</title>
        <authorList>
            <person name="Bentley S.D."/>
            <person name="Corton C."/>
            <person name="Brown S.E."/>
            <person name="Barron A."/>
            <person name="Clark L."/>
            <person name="Doggett J."/>
            <person name="Harris B."/>
            <person name="Ormond D."/>
            <person name="Quail M.A."/>
            <person name="May G."/>
            <person name="Francis D."/>
            <person name="Knudson D."/>
            <person name="Parkhill J."/>
            <person name="Ishimaru C.A."/>
        </authorList>
    </citation>
    <scope>NUCLEOTIDE SEQUENCE [LARGE SCALE GENOMIC DNA]</scope>
    <source>
        <strain>ATCC 33113 / DSM 20744 / JCM 9667 / LMG 2889 / ICMP 2535 / C-1</strain>
    </source>
</reference>
<comment type="function">
    <text evidence="1">Involved in transcription antitermination. Required for transcription of ribosomal RNA (rRNA) genes. Binds specifically to the boxA antiterminator sequence of the ribosomal RNA (rrn) operons.</text>
</comment>
<comment type="similarity">
    <text evidence="1">Belongs to the NusB family.</text>
</comment>
<proteinExistence type="inferred from homology"/>
<sequence>MSARTKARKRALDVLYVADIRGESIPATLAVEQQRAAAEPDRQASWAYAREIAEGFVEHQDEIDELIETYSVNWTLARMPAVDRAILRIGIWEILFNADVPDGVAISESVDLASSLSTDESASFVNGMLARIAAAQA</sequence>